<name>AUG3_ARATH</name>
<proteinExistence type="evidence at protein level"/>
<protein>
    <recommendedName>
        <fullName evidence="4">AUGMIN subunit 3</fullName>
    </recommendedName>
</protein>
<organism evidence="8">
    <name type="scientific">Arabidopsis thaliana</name>
    <name type="common">Mouse-ear cress</name>
    <dbReference type="NCBI Taxonomy" id="3702"/>
    <lineage>
        <taxon>Eukaryota</taxon>
        <taxon>Viridiplantae</taxon>
        <taxon>Streptophyta</taxon>
        <taxon>Embryophyta</taxon>
        <taxon>Tracheophyta</taxon>
        <taxon>Spermatophyta</taxon>
        <taxon>Magnoliopsida</taxon>
        <taxon>eudicotyledons</taxon>
        <taxon>Gunneridae</taxon>
        <taxon>Pentapetalae</taxon>
        <taxon>rosids</taxon>
        <taxon>malvids</taxon>
        <taxon>Brassicales</taxon>
        <taxon>Brassicaceae</taxon>
        <taxon>Camelineae</taxon>
        <taxon>Arabidopsis</taxon>
    </lineage>
</organism>
<keyword id="KW-0131">Cell cycle</keyword>
<keyword id="KW-0132">Cell division</keyword>
<keyword id="KW-0175">Coiled coil</keyword>
<keyword id="KW-0963">Cytoplasm</keyword>
<keyword id="KW-0206">Cytoskeleton</keyword>
<keyword id="KW-0493">Microtubule</keyword>
<keyword id="KW-0498">Mitosis</keyword>
<keyword id="KW-1185">Reference proteome</keyword>
<comment type="function">
    <text evidence="2">Involved in microtubules reorganization during spindle and phragmoplast development. Required for gamma-tubulin localization during mitosis.</text>
</comment>
<comment type="subunit">
    <text evidence="2 3">Part of the augmin complex composed of 8 subunits (PubMed:22505726). The complex acts on microtubules and interacts with gamma-tubulin in spindles and the phragmoplast (PubMed:22505726). Interacts with AUG1 (PubMed:21750235).</text>
</comment>
<comment type="subcellular location">
    <subcellularLocation>
        <location evidence="2">Cytoplasm</location>
        <location evidence="2">Cytoskeleton</location>
        <location evidence="2">Spindle</location>
    </subcellularLocation>
    <subcellularLocation>
        <location evidence="2">Cytoplasm</location>
        <location evidence="2">Cytoskeleton</location>
        <location evidence="2">Phragmoplast</location>
    </subcellularLocation>
    <text evidence="2">Preferentially localizes to microtubules minus ends.</text>
</comment>
<comment type="disruption phenotype">
    <text evidence="2">Lethal when homozygous.</text>
</comment>
<comment type="similarity">
    <text evidence="5">Belongs to the HAUS3 family.</text>
</comment>
<comment type="sequence caution" evidence="5">
    <conflict type="erroneous gene model prediction">
        <sequence resource="EMBL-CDS" id="BAA96972"/>
    </conflict>
</comment>
<dbReference type="EMBL" id="AB020745">
    <property type="protein sequence ID" value="BAA96972.1"/>
    <property type="status" value="ALT_SEQ"/>
    <property type="molecule type" value="Genomic_DNA"/>
</dbReference>
<dbReference type="EMBL" id="CP002688">
    <property type="protein sequence ID" value="AED95681.1"/>
    <property type="molecule type" value="Genomic_DNA"/>
</dbReference>
<dbReference type="EMBL" id="AK228752">
    <property type="protein sequence ID" value="BAF00652.1"/>
    <property type="molecule type" value="mRNA"/>
</dbReference>
<dbReference type="RefSeq" id="NP_199663.2">
    <property type="nucleotide sequence ID" value="NM_124228.4"/>
</dbReference>
<dbReference type="SMR" id="Q0WQE7"/>
<dbReference type="FunCoup" id="Q0WQE7">
    <property type="interactions" value="3415"/>
</dbReference>
<dbReference type="STRING" id="3702.Q0WQE7"/>
<dbReference type="iPTMnet" id="Q0WQE7"/>
<dbReference type="PaxDb" id="3702-AT5G48520.1"/>
<dbReference type="ProteomicsDB" id="240928"/>
<dbReference type="EnsemblPlants" id="AT5G48520.1">
    <property type="protein sequence ID" value="AT5G48520.1"/>
    <property type="gene ID" value="AT5G48520"/>
</dbReference>
<dbReference type="GeneID" id="834908"/>
<dbReference type="Gramene" id="AT5G48520.1">
    <property type="protein sequence ID" value="AT5G48520.1"/>
    <property type="gene ID" value="AT5G48520"/>
</dbReference>
<dbReference type="KEGG" id="ath:AT5G48520"/>
<dbReference type="Araport" id="AT5G48520"/>
<dbReference type="TAIR" id="AT5G48520">
    <property type="gene designation" value="AUG3"/>
</dbReference>
<dbReference type="eggNOG" id="ENOG502R4I5">
    <property type="taxonomic scope" value="Eukaryota"/>
</dbReference>
<dbReference type="HOGENOM" id="CLU_036555_0_0_1"/>
<dbReference type="InParanoid" id="Q0WQE7"/>
<dbReference type="PhylomeDB" id="Q0WQE7"/>
<dbReference type="CD-CODE" id="33FCD62D">
    <property type="entry name" value="Centrosome"/>
</dbReference>
<dbReference type="PRO" id="PR:Q0WQE7"/>
<dbReference type="Proteomes" id="UP000006548">
    <property type="component" value="Chromosome 5"/>
</dbReference>
<dbReference type="ExpressionAtlas" id="Q0WQE7">
    <property type="expression patterns" value="baseline and differential"/>
</dbReference>
<dbReference type="GO" id="GO:0070652">
    <property type="term" value="C:HAUS complex"/>
    <property type="evidence" value="ECO:0007669"/>
    <property type="project" value="InterPro"/>
</dbReference>
<dbReference type="GO" id="GO:0005874">
    <property type="term" value="C:microtubule"/>
    <property type="evidence" value="ECO:0007669"/>
    <property type="project" value="UniProtKB-KW"/>
</dbReference>
<dbReference type="GO" id="GO:0005634">
    <property type="term" value="C:nucleus"/>
    <property type="evidence" value="ECO:0000314"/>
    <property type="project" value="TAIR"/>
</dbReference>
<dbReference type="GO" id="GO:0009524">
    <property type="term" value="C:phragmoplast"/>
    <property type="evidence" value="ECO:0000314"/>
    <property type="project" value="TAIR"/>
</dbReference>
<dbReference type="GO" id="GO:0005819">
    <property type="term" value="C:spindle"/>
    <property type="evidence" value="ECO:0000314"/>
    <property type="project" value="TAIR"/>
</dbReference>
<dbReference type="GO" id="GO:0051301">
    <property type="term" value="P:cell division"/>
    <property type="evidence" value="ECO:0007669"/>
    <property type="project" value="UniProtKB-KW"/>
</dbReference>
<dbReference type="GO" id="GO:0080175">
    <property type="term" value="P:phragmoplast microtubule organization"/>
    <property type="evidence" value="ECO:0000315"/>
    <property type="project" value="TAIR"/>
</dbReference>
<dbReference type="GO" id="GO:0051225">
    <property type="term" value="P:spindle assembly"/>
    <property type="evidence" value="ECO:0007669"/>
    <property type="project" value="InterPro"/>
</dbReference>
<dbReference type="InterPro" id="IPR026206">
    <property type="entry name" value="HAUS3"/>
</dbReference>
<dbReference type="InterPro" id="IPR032733">
    <property type="entry name" value="HAUS3_N"/>
</dbReference>
<dbReference type="PANTHER" id="PTHR19378">
    <property type="entry name" value="GOLGIN- RELATED"/>
    <property type="match status" value="1"/>
</dbReference>
<dbReference type="PANTHER" id="PTHR19378:SF0">
    <property type="entry name" value="HAUS AUGMIN-LIKE COMPLEX SUBUNIT 3"/>
    <property type="match status" value="1"/>
</dbReference>
<dbReference type="Pfam" id="PF14932">
    <property type="entry name" value="HAUS-augmin3"/>
    <property type="match status" value="1"/>
</dbReference>
<dbReference type="PRINTS" id="PR02089">
    <property type="entry name" value="HAUSAUGMINL3"/>
</dbReference>
<accession>Q0WQE7</accession>
<accession>Q9LV62</accession>
<sequence length="617" mass="69725">MSSARLCSLVAELGYEGAGKLDPDSFEWPFQYDDARPILDWICSSLRPSNVLSLAELSLYEQFQRDGKLLEGDDLDQAYDSISAFSSRRNNQEAVFGAEESIKEVRDATLAHKAEALELQRQLRRLQTQYDLLTGQSSALIQGRRARVAATSAVSGQITAIEDSLSARNLQMNGVLGRLASTSQELAHYHSGEEDGIYLAYSDFHAYLAGDSACTKELNQWFAKQLDTGPYRLVAEEGKSKCSWVSLDDTSNMLRDLEKSQHQRVAELQRLRSIFGTSERQWIEAQVENAKQQAILLTLKSQVTSVEAHIHFDLHSLRRKHADLVEEISTLYQKEEKLLSETIPELCWELAQLQDTYILQGDYDLKVMRQELYISKQKVFINHLVNQLARHQFLKLACQLEKKNMLGAFSLLKVIESELQGYLSATRSRVGRCSALIQAASDVQEQGAVDDRDSFLHGVRDLLSIHSNTQAGLSTYVSAPAIIQQIVALQSDLSSLQSDLENSLPDDRNRCINELCTHIQNLQQLLFASSTTAQPILTPWPLMKELDEMGKINSKLSTAVEEVTLEHRNKREIVKHHAKDVELQRRVFVDFFCNPERLRNQVRELNALVRARQASSS</sequence>
<gene>
    <name evidence="4" type="primary">AUG3</name>
    <name evidence="6" type="ordered locus">At5g48520</name>
    <name evidence="7" type="ORF">MJE7.16</name>
</gene>
<feature type="chain" id="PRO_0000434093" description="AUGMIN subunit 3">
    <location>
        <begin position="1"/>
        <end position="617"/>
    </location>
</feature>
<feature type="coiled-coil region" evidence="1">
    <location>
        <begin position="107"/>
        <end position="140"/>
    </location>
</feature>
<feature type="coiled-coil region" evidence="1">
    <location>
        <begin position="314"/>
        <end position="334"/>
    </location>
</feature>
<feature type="coiled-coil region" evidence="1">
    <location>
        <begin position="481"/>
        <end position="504"/>
    </location>
</feature>
<reference key="1">
    <citation type="journal article" date="2000" name="DNA Res.">
        <title>Structural analysis of Arabidopsis thaliana chromosome 5. X. Sequence features of the regions of 3,076,755 bp covered by sixty P1 and TAC clones.</title>
        <authorList>
            <person name="Sato S."/>
            <person name="Nakamura Y."/>
            <person name="Kaneko T."/>
            <person name="Katoh T."/>
            <person name="Asamizu E."/>
            <person name="Kotani H."/>
            <person name="Tabata S."/>
        </authorList>
    </citation>
    <scope>NUCLEOTIDE SEQUENCE [LARGE SCALE GENOMIC DNA]</scope>
    <source>
        <strain>cv. Columbia</strain>
    </source>
</reference>
<reference key="2">
    <citation type="journal article" date="2017" name="Plant J.">
        <title>Araport11: a complete reannotation of the Arabidopsis thaliana reference genome.</title>
        <authorList>
            <person name="Cheng C.Y."/>
            <person name="Krishnakumar V."/>
            <person name="Chan A.P."/>
            <person name="Thibaud-Nissen F."/>
            <person name="Schobel S."/>
            <person name="Town C.D."/>
        </authorList>
    </citation>
    <scope>GENOME REANNOTATION</scope>
    <source>
        <strain>cv. Columbia</strain>
    </source>
</reference>
<reference key="3">
    <citation type="submission" date="2006-07" db="EMBL/GenBank/DDBJ databases">
        <title>Large-scale analysis of RIKEN Arabidopsis full-length (RAFL) cDNAs.</title>
        <authorList>
            <person name="Totoki Y."/>
            <person name="Seki M."/>
            <person name="Ishida J."/>
            <person name="Nakajima M."/>
            <person name="Enju A."/>
            <person name="Kamiya A."/>
            <person name="Narusaka M."/>
            <person name="Shin-i T."/>
            <person name="Nakagawa M."/>
            <person name="Sakamoto N."/>
            <person name="Oishi K."/>
            <person name="Kohara Y."/>
            <person name="Kobayashi M."/>
            <person name="Toyoda A."/>
            <person name="Sakaki Y."/>
            <person name="Sakurai T."/>
            <person name="Iida K."/>
            <person name="Akiyama K."/>
            <person name="Satou M."/>
            <person name="Toyoda T."/>
            <person name="Konagaya A."/>
            <person name="Carninci P."/>
            <person name="Kawai J."/>
            <person name="Hayashizaki Y."/>
            <person name="Shinozaki K."/>
        </authorList>
    </citation>
    <scope>NUCLEOTIDE SEQUENCE [LARGE SCALE MRNA]</scope>
    <source>
        <strain>cv. Columbia</strain>
    </source>
</reference>
<reference key="4">
    <citation type="journal article" date="2011" name="Plant Cell">
        <title>Augmin plays a critical role in organizing the spindle and phragmoplast microtubule arrays in Arabidopsis.</title>
        <authorList>
            <person name="Ho C.M."/>
            <person name="Hotta T."/>
            <person name="Kong Z."/>
            <person name="Zeng C.J."/>
            <person name="Sun J."/>
            <person name="Lee Y.R."/>
            <person name="Liu B."/>
        </authorList>
    </citation>
    <scope>FUNCTION</scope>
    <scope>DISRUPTION PHENOTYPE</scope>
    <scope>SUBCELLULAR LOCATION</scope>
    <scope>INTERACTION WITH AUG1</scope>
</reference>
<reference key="5">
    <citation type="journal article" date="2012" name="Plant Cell">
        <title>Characterization of the Arabidopsis augmin complex uncovers its critical function in the assembly of the acentrosomal spindle and phragmoplast microtubule arrays.</title>
        <authorList>
            <person name="Hotta T."/>
            <person name="Kong Z."/>
            <person name="Ho C.M."/>
            <person name="Zeng C.J."/>
            <person name="Horio T."/>
            <person name="Fong S."/>
            <person name="Vuong T."/>
            <person name="Lee Y.R."/>
            <person name="Liu B."/>
        </authorList>
    </citation>
    <scope>IDENTIFICATION IN THE AUGMIN COMPLEX BY MASS SPECTROMETRY</scope>
</reference>
<evidence type="ECO:0000255" key="1"/>
<evidence type="ECO:0000269" key="2">
    <source>
    </source>
</evidence>
<evidence type="ECO:0000269" key="3">
    <source>
    </source>
</evidence>
<evidence type="ECO:0000303" key="4">
    <source>
    </source>
</evidence>
<evidence type="ECO:0000305" key="5"/>
<evidence type="ECO:0000312" key="6">
    <source>
        <dbReference type="Araport" id="AT5G48520"/>
    </source>
</evidence>
<evidence type="ECO:0000312" key="7">
    <source>
        <dbReference type="EMBL" id="BAA96972.1"/>
    </source>
</evidence>
<evidence type="ECO:0000312" key="8">
    <source>
        <dbReference type="EMBL" id="BAF00652.1"/>
    </source>
</evidence>